<comment type="function">
    <text evidence="1">Catalyzes quinol oxidation with the concomitant reduction of oxygen to water.</text>
</comment>
<comment type="catalytic activity">
    <reaction>
        <text>2 a quinol + O2 = 2 a quinone + 2 H2O</text>
        <dbReference type="Rhea" id="RHEA:55376"/>
        <dbReference type="ChEBI" id="CHEBI:15377"/>
        <dbReference type="ChEBI" id="CHEBI:15379"/>
        <dbReference type="ChEBI" id="CHEBI:24646"/>
        <dbReference type="ChEBI" id="CHEBI:132124"/>
    </reaction>
</comment>
<comment type="subcellular location">
    <subcellularLocation>
        <location evidence="1">Cell membrane</location>
        <topology evidence="1">Multi-pass membrane protein</topology>
    </subcellularLocation>
</comment>
<comment type="similarity">
    <text evidence="3">Belongs to the cytochrome c oxidase subunit 3 family.</text>
</comment>
<keyword id="KW-1003">Cell membrane</keyword>
<keyword id="KW-0472">Membrane</keyword>
<keyword id="KW-0560">Oxidoreductase</keyword>
<keyword id="KW-0812">Transmembrane</keyword>
<keyword id="KW-1133">Transmembrane helix</keyword>
<accession>Q5HH25</accession>
<sequence>MSHDTNTIDSRTHEGELNKLGFWIFITAEFALFGTLFATLLTLQHGGDYAGKMTTELFELPLVLIMTFALLFSSYTCGIAIYYMRQEKQKLMMFWMIITLLLGLVFVGFEIYEFAHYASEGVNPTIGSYWSSFFILLGTHGCHVSLGIVWAICLLIQIQRRGLDKYNAPKLFIVSLYWHFLDVVWVFIFTAVYMIGMVYSG</sequence>
<evidence type="ECO:0000250" key="1"/>
<evidence type="ECO:0000255" key="2"/>
<evidence type="ECO:0000305" key="3"/>
<protein>
    <recommendedName>
        <fullName>Probable quinol oxidase subunit 3</fullName>
        <ecNumber>1.10.3.-</ecNumber>
    </recommendedName>
    <alternativeName>
        <fullName>Quinol oxidase polypeptide III</fullName>
    </alternativeName>
</protein>
<organism>
    <name type="scientific">Staphylococcus aureus (strain COL)</name>
    <dbReference type="NCBI Taxonomy" id="93062"/>
    <lineage>
        <taxon>Bacteria</taxon>
        <taxon>Bacillati</taxon>
        <taxon>Bacillota</taxon>
        <taxon>Bacilli</taxon>
        <taxon>Bacillales</taxon>
        <taxon>Staphylococcaceae</taxon>
        <taxon>Staphylococcus</taxon>
    </lineage>
</organism>
<name>QOX3_STAAC</name>
<dbReference type="EC" id="1.10.3.-"/>
<dbReference type="EMBL" id="CP000046">
    <property type="protein sequence ID" value="AAW36532.1"/>
    <property type="molecule type" value="Genomic_DNA"/>
</dbReference>
<dbReference type="RefSeq" id="WP_000017736.1">
    <property type="nucleotide sequence ID" value="NZ_JBGOFO010000002.1"/>
</dbReference>
<dbReference type="SMR" id="Q5HH25"/>
<dbReference type="GeneID" id="66839255"/>
<dbReference type="KEGG" id="sac:SACOL1068"/>
<dbReference type="HOGENOM" id="CLU_044071_3_2_9"/>
<dbReference type="Proteomes" id="UP000000530">
    <property type="component" value="Chromosome"/>
</dbReference>
<dbReference type="GO" id="GO:0005886">
    <property type="term" value="C:plasma membrane"/>
    <property type="evidence" value="ECO:0007669"/>
    <property type="project" value="UniProtKB-SubCell"/>
</dbReference>
<dbReference type="GO" id="GO:0004129">
    <property type="term" value="F:cytochrome-c oxidase activity"/>
    <property type="evidence" value="ECO:0007669"/>
    <property type="project" value="InterPro"/>
</dbReference>
<dbReference type="GO" id="GO:0019646">
    <property type="term" value="P:aerobic electron transport chain"/>
    <property type="evidence" value="ECO:0007669"/>
    <property type="project" value="InterPro"/>
</dbReference>
<dbReference type="GO" id="GO:0042773">
    <property type="term" value="P:ATP synthesis coupled electron transport"/>
    <property type="evidence" value="ECO:0007669"/>
    <property type="project" value="InterPro"/>
</dbReference>
<dbReference type="CDD" id="cd02863">
    <property type="entry name" value="Ubiquinol_oxidase_III"/>
    <property type="match status" value="1"/>
</dbReference>
<dbReference type="FunFam" id="1.20.120.80:FF:000001">
    <property type="entry name" value="Cytochrome (Ubi)quinol oxidase subunit III"/>
    <property type="match status" value="1"/>
</dbReference>
<dbReference type="Gene3D" id="1.20.120.80">
    <property type="entry name" value="Cytochrome c oxidase, subunit III, four-helix bundle"/>
    <property type="match status" value="1"/>
</dbReference>
<dbReference type="InterPro" id="IPR024791">
    <property type="entry name" value="Cyt_c/ubiquinol_Oxase_su3"/>
</dbReference>
<dbReference type="InterPro" id="IPR000298">
    <property type="entry name" value="Cyt_c_oxidase-like_su3"/>
</dbReference>
<dbReference type="InterPro" id="IPR035973">
    <property type="entry name" value="Cyt_c_oxidase_su3-like_sf"/>
</dbReference>
<dbReference type="InterPro" id="IPR013833">
    <property type="entry name" value="Cyt_c_oxidase_su3_a-hlx"/>
</dbReference>
<dbReference type="InterPro" id="IPR014246">
    <property type="entry name" value="QoxC"/>
</dbReference>
<dbReference type="InterPro" id="IPR033946">
    <property type="entry name" value="Ubiquinol_oxase_su3_dom"/>
</dbReference>
<dbReference type="NCBIfam" id="TIGR02897">
    <property type="entry name" value="QoxC"/>
    <property type="match status" value="1"/>
</dbReference>
<dbReference type="PANTHER" id="PTHR11403:SF2">
    <property type="entry name" value="CYTOCHROME BO(3) UBIQUINOL OXIDASE SUBUNIT 3"/>
    <property type="match status" value="1"/>
</dbReference>
<dbReference type="PANTHER" id="PTHR11403">
    <property type="entry name" value="CYTOCHROME C OXIDASE SUBUNIT III"/>
    <property type="match status" value="1"/>
</dbReference>
<dbReference type="Pfam" id="PF00510">
    <property type="entry name" value="COX3"/>
    <property type="match status" value="1"/>
</dbReference>
<dbReference type="SUPFAM" id="SSF81452">
    <property type="entry name" value="Cytochrome c oxidase subunit III-like"/>
    <property type="match status" value="1"/>
</dbReference>
<dbReference type="PROSITE" id="PS50253">
    <property type="entry name" value="COX3"/>
    <property type="match status" value="1"/>
</dbReference>
<feature type="chain" id="PRO_0000275885" description="Probable quinol oxidase subunit 3">
    <location>
        <begin position="1"/>
        <end position="201"/>
    </location>
</feature>
<feature type="transmembrane region" description="Helical" evidence="2">
    <location>
        <begin position="20"/>
        <end position="40"/>
    </location>
</feature>
<feature type="transmembrane region" description="Helical" evidence="2">
    <location>
        <begin position="62"/>
        <end position="82"/>
    </location>
</feature>
<feature type="transmembrane region" description="Helical" evidence="2">
    <location>
        <begin position="91"/>
        <end position="111"/>
    </location>
</feature>
<feature type="transmembrane region" description="Helical" evidence="2">
    <location>
        <begin position="133"/>
        <end position="153"/>
    </location>
</feature>
<feature type="transmembrane region" description="Helical" evidence="2">
    <location>
        <begin position="172"/>
        <end position="192"/>
    </location>
</feature>
<gene>
    <name type="primary">qoxC</name>
    <name type="ordered locus">SACOL1068</name>
</gene>
<reference key="1">
    <citation type="journal article" date="2005" name="J. Bacteriol.">
        <title>Insights on evolution of virulence and resistance from the complete genome analysis of an early methicillin-resistant Staphylococcus aureus strain and a biofilm-producing methicillin-resistant Staphylococcus epidermidis strain.</title>
        <authorList>
            <person name="Gill S.R."/>
            <person name="Fouts D.E."/>
            <person name="Archer G.L."/>
            <person name="Mongodin E.F."/>
            <person name="DeBoy R.T."/>
            <person name="Ravel J."/>
            <person name="Paulsen I.T."/>
            <person name="Kolonay J.F."/>
            <person name="Brinkac L.M."/>
            <person name="Beanan M.J."/>
            <person name="Dodson R.J."/>
            <person name="Daugherty S.C."/>
            <person name="Madupu R."/>
            <person name="Angiuoli S.V."/>
            <person name="Durkin A.S."/>
            <person name="Haft D.H."/>
            <person name="Vamathevan J.J."/>
            <person name="Khouri H."/>
            <person name="Utterback T.R."/>
            <person name="Lee C."/>
            <person name="Dimitrov G."/>
            <person name="Jiang L."/>
            <person name="Qin H."/>
            <person name="Weidman J."/>
            <person name="Tran K."/>
            <person name="Kang K.H."/>
            <person name="Hance I.R."/>
            <person name="Nelson K.E."/>
            <person name="Fraser C.M."/>
        </authorList>
    </citation>
    <scope>NUCLEOTIDE SEQUENCE [LARGE SCALE GENOMIC DNA]</scope>
    <source>
        <strain>COL</strain>
    </source>
</reference>
<proteinExistence type="inferred from homology"/>